<evidence type="ECO:0000255" key="1">
    <source>
        <dbReference type="HAMAP-Rule" id="MF_00181"/>
    </source>
</evidence>
<organism>
    <name type="scientific">Yersinia pseudotuberculosis serotype IB (strain PB1/+)</name>
    <dbReference type="NCBI Taxonomy" id="502801"/>
    <lineage>
        <taxon>Bacteria</taxon>
        <taxon>Pseudomonadati</taxon>
        <taxon>Pseudomonadota</taxon>
        <taxon>Gammaproteobacteria</taxon>
        <taxon>Enterobacterales</taxon>
        <taxon>Yersiniaceae</taxon>
        <taxon>Yersinia</taxon>
    </lineage>
</organism>
<protein>
    <recommendedName>
        <fullName evidence="1">Probable cytosol aminopeptidase</fullName>
        <ecNumber evidence="1">3.4.11.1</ecNumber>
    </recommendedName>
    <alternativeName>
        <fullName evidence="1">Leucine aminopeptidase</fullName>
        <shortName evidence="1">LAP</shortName>
        <ecNumber evidence="1">3.4.11.10</ecNumber>
    </alternativeName>
    <alternativeName>
        <fullName evidence="1">Leucyl aminopeptidase</fullName>
    </alternativeName>
</protein>
<dbReference type="EC" id="3.4.11.1" evidence="1"/>
<dbReference type="EC" id="3.4.11.10" evidence="1"/>
<dbReference type="EMBL" id="CP001048">
    <property type="protein sequence ID" value="ACC87548.1"/>
    <property type="molecule type" value="Genomic_DNA"/>
</dbReference>
<dbReference type="RefSeq" id="WP_002209310.1">
    <property type="nucleotide sequence ID" value="NZ_CP009780.1"/>
</dbReference>
<dbReference type="SMR" id="B2K3E9"/>
<dbReference type="MEROPS" id="M17.003"/>
<dbReference type="GeneID" id="57975268"/>
<dbReference type="KEGG" id="ypb:YPTS_0562"/>
<dbReference type="PATRIC" id="fig|502801.10.peg.4238"/>
<dbReference type="GO" id="GO:0005737">
    <property type="term" value="C:cytoplasm"/>
    <property type="evidence" value="ECO:0007669"/>
    <property type="project" value="UniProtKB-SubCell"/>
</dbReference>
<dbReference type="GO" id="GO:0030145">
    <property type="term" value="F:manganese ion binding"/>
    <property type="evidence" value="ECO:0007669"/>
    <property type="project" value="UniProtKB-UniRule"/>
</dbReference>
<dbReference type="GO" id="GO:0070006">
    <property type="term" value="F:metalloaminopeptidase activity"/>
    <property type="evidence" value="ECO:0007669"/>
    <property type="project" value="InterPro"/>
</dbReference>
<dbReference type="GO" id="GO:0006508">
    <property type="term" value="P:proteolysis"/>
    <property type="evidence" value="ECO:0007669"/>
    <property type="project" value="UniProtKB-KW"/>
</dbReference>
<dbReference type="CDD" id="cd00433">
    <property type="entry name" value="Peptidase_M17"/>
    <property type="match status" value="1"/>
</dbReference>
<dbReference type="FunFam" id="3.40.220.10:FF:000001">
    <property type="entry name" value="Probable cytosol aminopeptidase"/>
    <property type="match status" value="1"/>
</dbReference>
<dbReference type="FunFam" id="3.40.630.10:FF:000004">
    <property type="entry name" value="Probable cytosol aminopeptidase"/>
    <property type="match status" value="1"/>
</dbReference>
<dbReference type="Gene3D" id="3.40.220.10">
    <property type="entry name" value="Leucine Aminopeptidase, subunit E, domain 1"/>
    <property type="match status" value="1"/>
</dbReference>
<dbReference type="Gene3D" id="3.40.630.10">
    <property type="entry name" value="Zn peptidases"/>
    <property type="match status" value="1"/>
</dbReference>
<dbReference type="HAMAP" id="MF_00181">
    <property type="entry name" value="Cytosol_peptidase_M17"/>
    <property type="match status" value="1"/>
</dbReference>
<dbReference type="InterPro" id="IPR011356">
    <property type="entry name" value="Leucine_aapep/pepB"/>
</dbReference>
<dbReference type="InterPro" id="IPR043472">
    <property type="entry name" value="Macro_dom-like"/>
</dbReference>
<dbReference type="InterPro" id="IPR000819">
    <property type="entry name" value="Peptidase_M17_C"/>
</dbReference>
<dbReference type="InterPro" id="IPR023042">
    <property type="entry name" value="Peptidase_M17_leu_NH2_pept"/>
</dbReference>
<dbReference type="InterPro" id="IPR008283">
    <property type="entry name" value="Peptidase_M17_N"/>
</dbReference>
<dbReference type="NCBIfam" id="NF002072">
    <property type="entry name" value="PRK00913.1-1"/>
    <property type="match status" value="1"/>
</dbReference>
<dbReference type="NCBIfam" id="NF002074">
    <property type="entry name" value="PRK00913.1-4"/>
    <property type="match status" value="1"/>
</dbReference>
<dbReference type="PANTHER" id="PTHR11963:SF23">
    <property type="entry name" value="CYTOSOL AMINOPEPTIDASE"/>
    <property type="match status" value="1"/>
</dbReference>
<dbReference type="PANTHER" id="PTHR11963">
    <property type="entry name" value="LEUCINE AMINOPEPTIDASE-RELATED"/>
    <property type="match status" value="1"/>
</dbReference>
<dbReference type="Pfam" id="PF00883">
    <property type="entry name" value="Peptidase_M17"/>
    <property type="match status" value="1"/>
</dbReference>
<dbReference type="Pfam" id="PF02789">
    <property type="entry name" value="Peptidase_M17_N"/>
    <property type="match status" value="1"/>
</dbReference>
<dbReference type="PRINTS" id="PR00481">
    <property type="entry name" value="LAMNOPPTDASE"/>
</dbReference>
<dbReference type="SUPFAM" id="SSF52949">
    <property type="entry name" value="Macro domain-like"/>
    <property type="match status" value="1"/>
</dbReference>
<dbReference type="SUPFAM" id="SSF53187">
    <property type="entry name" value="Zn-dependent exopeptidases"/>
    <property type="match status" value="1"/>
</dbReference>
<dbReference type="PROSITE" id="PS00631">
    <property type="entry name" value="CYTOSOL_AP"/>
    <property type="match status" value="1"/>
</dbReference>
<comment type="function">
    <text evidence="1">Presumably involved in the processing and regular turnover of intracellular proteins. Catalyzes the removal of unsubstituted N-terminal amino acids from various peptides.</text>
</comment>
<comment type="catalytic activity">
    <reaction evidence="1">
        <text>Release of an N-terminal amino acid, Xaa-|-Yaa-, in which Xaa is preferably Leu, but may be other amino acids including Pro although not Arg or Lys, and Yaa may be Pro. Amino acid amides and methyl esters are also readily hydrolyzed, but rates on arylamides are exceedingly low.</text>
        <dbReference type="EC" id="3.4.11.1"/>
    </reaction>
</comment>
<comment type="catalytic activity">
    <reaction evidence="1">
        <text>Release of an N-terminal amino acid, preferentially leucine, but not glutamic or aspartic acids.</text>
        <dbReference type="EC" id="3.4.11.10"/>
    </reaction>
</comment>
<comment type="cofactor">
    <cofactor evidence="1">
        <name>Mn(2+)</name>
        <dbReference type="ChEBI" id="CHEBI:29035"/>
    </cofactor>
    <text evidence="1">Binds 2 manganese ions per subunit.</text>
</comment>
<comment type="subcellular location">
    <subcellularLocation>
        <location evidence="1">Cytoplasm</location>
    </subcellularLocation>
</comment>
<comment type="similarity">
    <text evidence="1">Belongs to the peptidase M17 family.</text>
</comment>
<name>AMPA_YERPB</name>
<sequence length="503" mass="54797">MEFSVKSGSPEKQRSACIVVGVFEPRRLSPIAEQLDKISDGYISALLRRGELEGKVGQTLLLHHVPNILSERILLIGCGKERELDERQYKQVIQKTINTLNDTGSMEAVCFLTELHVKGRNTYWKVRQAVETAKETLYTFDQLKSNKTEPRRPLRKMVFNVPTRRELTSGERAIQHGLAIASGIKAAKDLGNMPPNICNAAYLASQARQLADAFSTNTVTRVIGEQQMKELGMHAYLAVGHGSQNESLMSVIEYKGNPNKDAKPIVLVGKGLTFDSGGISIKPAEGMDEMKYDMCGAATVYGVMRVVAELQLPLNVVGVLAGCENMPGGRAYRPGDILTTMSGQTVEVLNTDAEGRLVLCDALTYVERFEPELVIDIATLTGACVVALGNHLTGLMSNHNPLAHELIGASEQAGDRAWRLPLGEEYYEQLDSNFADMANIGGRAGGAITAGCFLSRFTRKYSWAHLDIAGTAWRSGKNKGATGRPVALLSQFLLNRAGLNGDD</sequence>
<accession>B2K3E9</accession>
<proteinExistence type="inferred from homology"/>
<feature type="chain" id="PRO_1000098364" description="Probable cytosol aminopeptidase">
    <location>
        <begin position="1"/>
        <end position="503"/>
    </location>
</feature>
<feature type="active site" evidence="1">
    <location>
        <position position="282"/>
    </location>
</feature>
<feature type="active site" evidence="1">
    <location>
        <position position="356"/>
    </location>
</feature>
<feature type="binding site" evidence="1">
    <location>
        <position position="270"/>
    </location>
    <ligand>
        <name>Mn(2+)</name>
        <dbReference type="ChEBI" id="CHEBI:29035"/>
        <label>2</label>
    </ligand>
</feature>
<feature type="binding site" evidence="1">
    <location>
        <position position="275"/>
    </location>
    <ligand>
        <name>Mn(2+)</name>
        <dbReference type="ChEBI" id="CHEBI:29035"/>
        <label>1</label>
    </ligand>
</feature>
<feature type="binding site" evidence="1">
    <location>
        <position position="275"/>
    </location>
    <ligand>
        <name>Mn(2+)</name>
        <dbReference type="ChEBI" id="CHEBI:29035"/>
        <label>2</label>
    </ligand>
</feature>
<feature type="binding site" evidence="1">
    <location>
        <position position="293"/>
    </location>
    <ligand>
        <name>Mn(2+)</name>
        <dbReference type="ChEBI" id="CHEBI:29035"/>
        <label>2</label>
    </ligand>
</feature>
<feature type="binding site" evidence="1">
    <location>
        <position position="352"/>
    </location>
    <ligand>
        <name>Mn(2+)</name>
        <dbReference type="ChEBI" id="CHEBI:29035"/>
        <label>1</label>
    </ligand>
</feature>
<feature type="binding site" evidence="1">
    <location>
        <position position="354"/>
    </location>
    <ligand>
        <name>Mn(2+)</name>
        <dbReference type="ChEBI" id="CHEBI:29035"/>
        <label>1</label>
    </ligand>
</feature>
<feature type="binding site" evidence="1">
    <location>
        <position position="354"/>
    </location>
    <ligand>
        <name>Mn(2+)</name>
        <dbReference type="ChEBI" id="CHEBI:29035"/>
        <label>2</label>
    </ligand>
</feature>
<gene>
    <name evidence="1" type="primary">pepA</name>
    <name type="ordered locus">YPTS_0562</name>
</gene>
<keyword id="KW-0031">Aminopeptidase</keyword>
<keyword id="KW-0963">Cytoplasm</keyword>
<keyword id="KW-0378">Hydrolase</keyword>
<keyword id="KW-0464">Manganese</keyword>
<keyword id="KW-0479">Metal-binding</keyword>
<keyword id="KW-0645">Protease</keyword>
<reference key="1">
    <citation type="submission" date="2008-04" db="EMBL/GenBank/DDBJ databases">
        <title>Complete sequence of Yersinia pseudotuberculosis PB1/+.</title>
        <authorList>
            <person name="Copeland A."/>
            <person name="Lucas S."/>
            <person name="Lapidus A."/>
            <person name="Glavina del Rio T."/>
            <person name="Dalin E."/>
            <person name="Tice H."/>
            <person name="Bruce D."/>
            <person name="Goodwin L."/>
            <person name="Pitluck S."/>
            <person name="Munk A.C."/>
            <person name="Brettin T."/>
            <person name="Detter J.C."/>
            <person name="Han C."/>
            <person name="Tapia R."/>
            <person name="Schmutz J."/>
            <person name="Larimer F."/>
            <person name="Land M."/>
            <person name="Hauser L."/>
            <person name="Challacombe J.F."/>
            <person name="Green L."/>
            <person name="Lindler L.E."/>
            <person name="Nikolich M.P."/>
            <person name="Richardson P."/>
        </authorList>
    </citation>
    <scope>NUCLEOTIDE SEQUENCE [LARGE SCALE GENOMIC DNA]</scope>
    <source>
        <strain>PB1/+</strain>
    </source>
</reference>